<organism>
    <name type="scientific">Dechloromonas aromatica (strain RCB)</name>
    <dbReference type="NCBI Taxonomy" id="159087"/>
    <lineage>
        <taxon>Bacteria</taxon>
        <taxon>Pseudomonadati</taxon>
        <taxon>Pseudomonadota</taxon>
        <taxon>Betaproteobacteria</taxon>
        <taxon>Rhodocyclales</taxon>
        <taxon>Azonexaceae</taxon>
        <taxon>Dechloromonas</taxon>
    </lineage>
</organism>
<dbReference type="EC" id="2.7.1.30" evidence="1"/>
<dbReference type="EMBL" id="CP000089">
    <property type="protein sequence ID" value="AAZ46668.1"/>
    <property type="molecule type" value="Genomic_DNA"/>
</dbReference>
<dbReference type="SMR" id="Q47ER3"/>
<dbReference type="STRING" id="159087.Daro_1922"/>
<dbReference type="KEGG" id="dar:Daro_1922"/>
<dbReference type="eggNOG" id="COG0554">
    <property type="taxonomic scope" value="Bacteria"/>
</dbReference>
<dbReference type="HOGENOM" id="CLU_009281_2_3_4"/>
<dbReference type="OrthoDB" id="9805576at2"/>
<dbReference type="UniPathway" id="UPA00618">
    <property type="reaction ID" value="UER00672"/>
</dbReference>
<dbReference type="GO" id="GO:0005829">
    <property type="term" value="C:cytosol"/>
    <property type="evidence" value="ECO:0007669"/>
    <property type="project" value="TreeGrafter"/>
</dbReference>
<dbReference type="GO" id="GO:0005524">
    <property type="term" value="F:ATP binding"/>
    <property type="evidence" value="ECO:0007669"/>
    <property type="project" value="UniProtKB-UniRule"/>
</dbReference>
<dbReference type="GO" id="GO:0004370">
    <property type="term" value="F:glycerol kinase activity"/>
    <property type="evidence" value="ECO:0000250"/>
    <property type="project" value="UniProtKB"/>
</dbReference>
<dbReference type="GO" id="GO:0019563">
    <property type="term" value="P:glycerol catabolic process"/>
    <property type="evidence" value="ECO:0007669"/>
    <property type="project" value="UniProtKB-UniRule"/>
</dbReference>
<dbReference type="GO" id="GO:0006071">
    <property type="term" value="P:glycerol metabolic process"/>
    <property type="evidence" value="ECO:0000250"/>
    <property type="project" value="UniProtKB"/>
</dbReference>
<dbReference type="GO" id="GO:0006072">
    <property type="term" value="P:glycerol-3-phosphate metabolic process"/>
    <property type="evidence" value="ECO:0007669"/>
    <property type="project" value="InterPro"/>
</dbReference>
<dbReference type="CDD" id="cd07786">
    <property type="entry name" value="FGGY_EcGK_like"/>
    <property type="match status" value="1"/>
</dbReference>
<dbReference type="FunFam" id="3.30.420.40:FF:000007">
    <property type="entry name" value="Glycerol kinase"/>
    <property type="match status" value="1"/>
</dbReference>
<dbReference type="FunFam" id="3.30.420.40:FF:000008">
    <property type="entry name" value="Glycerol kinase"/>
    <property type="match status" value="1"/>
</dbReference>
<dbReference type="Gene3D" id="3.30.420.40">
    <property type="match status" value="2"/>
</dbReference>
<dbReference type="HAMAP" id="MF_00186">
    <property type="entry name" value="Glycerol_kin"/>
    <property type="match status" value="1"/>
</dbReference>
<dbReference type="InterPro" id="IPR043129">
    <property type="entry name" value="ATPase_NBD"/>
</dbReference>
<dbReference type="InterPro" id="IPR000577">
    <property type="entry name" value="Carb_kinase_FGGY"/>
</dbReference>
<dbReference type="InterPro" id="IPR018483">
    <property type="entry name" value="Carb_kinase_FGGY_CS"/>
</dbReference>
<dbReference type="InterPro" id="IPR018485">
    <property type="entry name" value="FGGY_C"/>
</dbReference>
<dbReference type="InterPro" id="IPR018484">
    <property type="entry name" value="FGGY_N"/>
</dbReference>
<dbReference type="InterPro" id="IPR005999">
    <property type="entry name" value="Glycerol_kin"/>
</dbReference>
<dbReference type="NCBIfam" id="TIGR01311">
    <property type="entry name" value="glycerol_kin"/>
    <property type="match status" value="1"/>
</dbReference>
<dbReference type="NCBIfam" id="NF000756">
    <property type="entry name" value="PRK00047.1"/>
    <property type="match status" value="1"/>
</dbReference>
<dbReference type="PANTHER" id="PTHR10196:SF69">
    <property type="entry name" value="GLYCEROL KINASE"/>
    <property type="match status" value="1"/>
</dbReference>
<dbReference type="PANTHER" id="PTHR10196">
    <property type="entry name" value="SUGAR KINASE"/>
    <property type="match status" value="1"/>
</dbReference>
<dbReference type="Pfam" id="PF02782">
    <property type="entry name" value="FGGY_C"/>
    <property type="match status" value="1"/>
</dbReference>
<dbReference type="Pfam" id="PF00370">
    <property type="entry name" value="FGGY_N"/>
    <property type="match status" value="1"/>
</dbReference>
<dbReference type="PIRSF" id="PIRSF000538">
    <property type="entry name" value="GlpK"/>
    <property type="match status" value="1"/>
</dbReference>
<dbReference type="SUPFAM" id="SSF53067">
    <property type="entry name" value="Actin-like ATPase domain"/>
    <property type="match status" value="2"/>
</dbReference>
<dbReference type="PROSITE" id="PS00933">
    <property type="entry name" value="FGGY_KINASES_1"/>
    <property type="match status" value="1"/>
</dbReference>
<dbReference type="PROSITE" id="PS00445">
    <property type="entry name" value="FGGY_KINASES_2"/>
    <property type="match status" value="1"/>
</dbReference>
<protein>
    <recommendedName>
        <fullName evidence="1">Glycerol kinase</fullName>
        <ecNumber evidence="1">2.7.1.30</ecNumber>
    </recommendedName>
    <alternativeName>
        <fullName evidence="1">ATP:glycerol 3-phosphotransferase</fullName>
    </alternativeName>
    <alternativeName>
        <fullName evidence="1">Glycerokinase</fullName>
        <shortName evidence="1">GK</shortName>
    </alternativeName>
</protein>
<proteinExistence type="inferred from homology"/>
<accession>Q47ER3</accession>
<reference key="1">
    <citation type="journal article" date="2009" name="BMC Genomics">
        <title>Metabolic analysis of the soil microbe Dechloromonas aromatica str. RCB: indications of a surprisingly complex life-style and cryptic anaerobic pathways for aromatic degradation.</title>
        <authorList>
            <person name="Salinero K.K."/>
            <person name="Keller K."/>
            <person name="Feil W.S."/>
            <person name="Feil H."/>
            <person name="Trong S."/>
            <person name="Di Bartolo G."/>
            <person name="Lapidus A."/>
        </authorList>
    </citation>
    <scope>NUCLEOTIDE SEQUENCE [LARGE SCALE GENOMIC DNA]</scope>
    <source>
        <strain>RCB</strain>
    </source>
</reference>
<comment type="function">
    <text evidence="1">Key enzyme in the regulation of glycerol uptake and metabolism. Catalyzes the phosphorylation of glycerol to yield sn-glycerol 3-phosphate.</text>
</comment>
<comment type="catalytic activity">
    <reaction evidence="1">
        <text>glycerol + ATP = sn-glycerol 3-phosphate + ADP + H(+)</text>
        <dbReference type="Rhea" id="RHEA:21644"/>
        <dbReference type="ChEBI" id="CHEBI:15378"/>
        <dbReference type="ChEBI" id="CHEBI:17754"/>
        <dbReference type="ChEBI" id="CHEBI:30616"/>
        <dbReference type="ChEBI" id="CHEBI:57597"/>
        <dbReference type="ChEBI" id="CHEBI:456216"/>
        <dbReference type="EC" id="2.7.1.30"/>
    </reaction>
</comment>
<comment type="activity regulation">
    <text evidence="1">Inhibited by fructose 1,6-bisphosphate (FBP).</text>
</comment>
<comment type="pathway">
    <text evidence="1">Polyol metabolism; glycerol degradation via glycerol kinase pathway; sn-glycerol 3-phosphate from glycerol: step 1/1.</text>
</comment>
<comment type="similarity">
    <text evidence="1">Belongs to the FGGY kinase family.</text>
</comment>
<gene>
    <name evidence="1" type="primary">glpK</name>
    <name type="ordered locus">Daro_1922</name>
</gene>
<keyword id="KW-0067">ATP-binding</keyword>
<keyword id="KW-0319">Glycerol metabolism</keyword>
<keyword id="KW-0418">Kinase</keyword>
<keyword id="KW-0547">Nucleotide-binding</keyword>
<keyword id="KW-0808">Transferase</keyword>
<evidence type="ECO:0000255" key="1">
    <source>
        <dbReference type="HAMAP-Rule" id="MF_00186"/>
    </source>
</evidence>
<feature type="chain" id="PRO_1000020725" description="Glycerol kinase">
    <location>
        <begin position="1"/>
        <end position="502"/>
    </location>
</feature>
<feature type="binding site" evidence="1">
    <location>
        <position position="16"/>
    </location>
    <ligand>
        <name>ADP</name>
        <dbReference type="ChEBI" id="CHEBI:456216"/>
    </ligand>
</feature>
<feature type="binding site" evidence="1">
    <location>
        <position position="16"/>
    </location>
    <ligand>
        <name>ATP</name>
        <dbReference type="ChEBI" id="CHEBI:30616"/>
    </ligand>
</feature>
<feature type="binding site" evidence="1">
    <location>
        <position position="16"/>
    </location>
    <ligand>
        <name>sn-glycerol 3-phosphate</name>
        <dbReference type="ChEBI" id="CHEBI:57597"/>
    </ligand>
</feature>
<feature type="binding site" evidence="1">
    <location>
        <position position="17"/>
    </location>
    <ligand>
        <name>ATP</name>
        <dbReference type="ChEBI" id="CHEBI:30616"/>
    </ligand>
</feature>
<feature type="binding site" evidence="1">
    <location>
        <position position="18"/>
    </location>
    <ligand>
        <name>ATP</name>
        <dbReference type="ChEBI" id="CHEBI:30616"/>
    </ligand>
</feature>
<feature type="binding site" evidence="1">
    <location>
        <position position="20"/>
    </location>
    <ligand>
        <name>ADP</name>
        <dbReference type="ChEBI" id="CHEBI:456216"/>
    </ligand>
</feature>
<feature type="binding site" evidence="1">
    <location>
        <position position="86"/>
    </location>
    <ligand>
        <name>glycerol</name>
        <dbReference type="ChEBI" id="CHEBI:17754"/>
    </ligand>
</feature>
<feature type="binding site" evidence="1">
    <location>
        <position position="86"/>
    </location>
    <ligand>
        <name>sn-glycerol 3-phosphate</name>
        <dbReference type="ChEBI" id="CHEBI:57597"/>
    </ligand>
</feature>
<feature type="binding site" evidence="1">
    <location>
        <position position="87"/>
    </location>
    <ligand>
        <name>glycerol</name>
        <dbReference type="ChEBI" id="CHEBI:17754"/>
    </ligand>
</feature>
<feature type="binding site" evidence="1">
    <location>
        <position position="87"/>
    </location>
    <ligand>
        <name>sn-glycerol 3-phosphate</name>
        <dbReference type="ChEBI" id="CHEBI:57597"/>
    </ligand>
</feature>
<feature type="binding site" evidence="1">
    <location>
        <position position="138"/>
    </location>
    <ligand>
        <name>glycerol</name>
        <dbReference type="ChEBI" id="CHEBI:17754"/>
    </ligand>
</feature>
<feature type="binding site" evidence="1">
    <location>
        <position position="138"/>
    </location>
    <ligand>
        <name>sn-glycerol 3-phosphate</name>
        <dbReference type="ChEBI" id="CHEBI:57597"/>
    </ligand>
</feature>
<feature type="binding site" evidence="1">
    <location>
        <position position="247"/>
    </location>
    <ligand>
        <name>glycerol</name>
        <dbReference type="ChEBI" id="CHEBI:17754"/>
    </ligand>
</feature>
<feature type="binding site" evidence="1">
    <location>
        <position position="247"/>
    </location>
    <ligand>
        <name>sn-glycerol 3-phosphate</name>
        <dbReference type="ChEBI" id="CHEBI:57597"/>
    </ligand>
</feature>
<feature type="binding site" evidence="1">
    <location>
        <position position="248"/>
    </location>
    <ligand>
        <name>glycerol</name>
        <dbReference type="ChEBI" id="CHEBI:17754"/>
    </ligand>
</feature>
<feature type="binding site" evidence="1">
    <location>
        <position position="269"/>
    </location>
    <ligand>
        <name>ADP</name>
        <dbReference type="ChEBI" id="CHEBI:456216"/>
    </ligand>
</feature>
<feature type="binding site" evidence="1">
    <location>
        <position position="269"/>
    </location>
    <ligand>
        <name>ATP</name>
        <dbReference type="ChEBI" id="CHEBI:30616"/>
    </ligand>
</feature>
<feature type="binding site" evidence="1">
    <location>
        <position position="312"/>
    </location>
    <ligand>
        <name>ADP</name>
        <dbReference type="ChEBI" id="CHEBI:456216"/>
    </ligand>
</feature>
<feature type="binding site" evidence="1">
    <location>
        <position position="312"/>
    </location>
    <ligand>
        <name>ATP</name>
        <dbReference type="ChEBI" id="CHEBI:30616"/>
    </ligand>
</feature>
<feature type="binding site" evidence="1">
    <location>
        <position position="316"/>
    </location>
    <ligand>
        <name>ATP</name>
        <dbReference type="ChEBI" id="CHEBI:30616"/>
    </ligand>
</feature>
<feature type="binding site" evidence="1">
    <location>
        <position position="413"/>
    </location>
    <ligand>
        <name>ADP</name>
        <dbReference type="ChEBI" id="CHEBI:456216"/>
    </ligand>
</feature>
<feature type="binding site" evidence="1">
    <location>
        <position position="413"/>
    </location>
    <ligand>
        <name>ATP</name>
        <dbReference type="ChEBI" id="CHEBI:30616"/>
    </ligand>
</feature>
<feature type="binding site" evidence="1">
    <location>
        <position position="417"/>
    </location>
    <ligand>
        <name>ADP</name>
        <dbReference type="ChEBI" id="CHEBI:456216"/>
    </ligand>
</feature>
<sequence length="502" mass="54712">MQDRSDQFVLALDQGTTSTRAILFGRKGDIHGVAQQEITQHYPQPGWVEHDAEEIWQAQLAVARAALRDNGILAKQIVAVGMTNQRETTVLWDRSSGEPLHRAIVWQDRRTAGLCDELTTAGHAGLFRERTGLVLDAYFSGTKLKWLLDHIPGARSRAERGELAFGTIDSWLTWKLSGGRAHVTDPSNASRTLLFDIHRCCWDEELLALLDIPMALLPRIVDSSGEIATIAAEWLGAEIPLSGIAGDQQAATFGQVCLQHGMAKNTYGTGCFLLMNTGQAPMASCHRLLTTIGWQRQGKTTYLLEGSVFMGGATVQWLRDGLGLISSADQIESLAASVADNGGVYLVPAHTGLGAPYWDPFARGALFGMTRGTTRAHIARAALEAIAFQSADVLQAMEKDAGQSLSELRVDGGAARNDLLMQFQADLLGVPVVRPQVTETTALGAAYLAGLAVGFWQDEAELTALWRADRRFEPSMAEDRRSALFADWHRAVERSLHWANAT</sequence>
<name>GLPK_DECAR</name>